<accession>A6MMI6</accession>
<gene>
    <name type="primary">rpl2-B</name>
</gene>
<keyword id="KW-0150">Chloroplast</keyword>
<keyword id="KW-0934">Plastid</keyword>
<keyword id="KW-0687">Ribonucleoprotein</keyword>
<keyword id="KW-0689">Ribosomal protein</keyword>
<proteinExistence type="inferred from homology"/>
<name>RK2B_CHLSC</name>
<comment type="subunit">
    <text evidence="1">Part of the 50S ribosomal subunit.</text>
</comment>
<comment type="subcellular location">
    <subcellularLocation>
        <location>Plastid</location>
        <location>Chloroplast</location>
    </subcellularLocation>
</comment>
<comment type="similarity">
    <text evidence="4">Belongs to the universal ribosomal protein uL2 family.</text>
</comment>
<comment type="caution">
    <text evidence="4">There is 1 gene for this protein in each of the chloroplast inverted repeats; while they are usually identical, in this organism they are not. The other copy is AC A6MMG4.</text>
</comment>
<geneLocation type="chloroplast"/>
<protein>
    <recommendedName>
        <fullName evidence="2">Large ribosomal subunit protein uL2cy</fullName>
    </recommendedName>
    <alternativeName>
        <fullName evidence="4">50S ribosomal protein L2-B, chloroplastic</fullName>
    </alternativeName>
</protein>
<sequence length="273" mass="29641">MAIHLYKTSTPSTRNGAVDSQVKSNPRNNLIYGQHHCGKGRNARGIITAGHRGGGHKRLYRKIDFRRNEKDISGRIVTIEYDPNRNAYICLIHYGDGEKRYILHPRGAIIGDTIVSGTEVPISMGNALPLTDMPLGTAIHNIEITLGKGGQLARAAGAVAKLIAKEGKSATLRLPSGEVRLISKNCSATVGQVGNVGVNQKSLGRAGSKCWLGKRPVVRGVVMNPVDHPHGGGEGRSPIGRKKPTTPWGYPALGRRSRKRNKYSDSLILRRRK</sequence>
<evidence type="ECO:0000250" key="1"/>
<evidence type="ECO:0000255" key="2">
    <source>
        <dbReference type="HAMAP-Rule" id="MF_01320"/>
    </source>
</evidence>
<evidence type="ECO:0000256" key="3">
    <source>
        <dbReference type="SAM" id="MobiDB-lite"/>
    </source>
</evidence>
<evidence type="ECO:0000305" key="4"/>
<organism>
    <name type="scientific">Chloranthus spicatus</name>
    <name type="common">Chulantree</name>
    <name type="synonym">Nigrina spicata</name>
    <dbReference type="NCBI Taxonomy" id="13006"/>
    <lineage>
        <taxon>Eukaryota</taxon>
        <taxon>Viridiplantae</taxon>
        <taxon>Streptophyta</taxon>
        <taxon>Embryophyta</taxon>
        <taxon>Tracheophyta</taxon>
        <taxon>Spermatophyta</taxon>
        <taxon>Magnoliopsida</taxon>
        <taxon>Chloranthales</taxon>
        <taxon>Chloranthaceae</taxon>
        <taxon>Chloranthus</taxon>
    </lineage>
</organism>
<dbReference type="EMBL" id="EF380352">
    <property type="protein sequence ID" value="ABQ43323.1"/>
    <property type="molecule type" value="Genomic_DNA"/>
</dbReference>
<dbReference type="SMR" id="A6MMI6"/>
<dbReference type="GO" id="GO:0009507">
    <property type="term" value="C:chloroplast"/>
    <property type="evidence" value="ECO:0007669"/>
    <property type="project" value="UniProtKB-SubCell"/>
</dbReference>
<dbReference type="GO" id="GO:0005762">
    <property type="term" value="C:mitochondrial large ribosomal subunit"/>
    <property type="evidence" value="ECO:0007669"/>
    <property type="project" value="TreeGrafter"/>
</dbReference>
<dbReference type="GO" id="GO:0019843">
    <property type="term" value="F:rRNA binding"/>
    <property type="evidence" value="ECO:0007669"/>
    <property type="project" value="UniProtKB-UniRule"/>
</dbReference>
<dbReference type="GO" id="GO:0003735">
    <property type="term" value="F:structural constituent of ribosome"/>
    <property type="evidence" value="ECO:0007669"/>
    <property type="project" value="InterPro"/>
</dbReference>
<dbReference type="GO" id="GO:0016740">
    <property type="term" value="F:transferase activity"/>
    <property type="evidence" value="ECO:0007669"/>
    <property type="project" value="InterPro"/>
</dbReference>
<dbReference type="GO" id="GO:0032543">
    <property type="term" value="P:mitochondrial translation"/>
    <property type="evidence" value="ECO:0007669"/>
    <property type="project" value="TreeGrafter"/>
</dbReference>
<dbReference type="FunFam" id="4.10.950.10:FF:000001">
    <property type="entry name" value="50S ribosomal protein L2"/>
    <property type="match status" value="1"/>
</dbReference>
<dbReference type="FunFam" id="2.30.30.30:FF:000008">
    <property type="entry name" value="50S ribosomal protein L2, chloroplastic"/>
    <property type="match status" value="1"/>
</dbReference>
<dbReference type="FunFam" id="2.40.50.140:FF:000029">
    <property type="entry name" value="50S ribosomal protein L2, chloroplastic"/>
    <property type="match status" value="1"/>
</dbReference>
<dbReference type="Gene3D" id="2.30.30.30">
    <property type="match status" value="1"/>
</dbReference>
<dbReference type="Gene3D" id="2.40.50.140">
    <property type="entry name" value="Nucleic acid-binding proteins"/>
    <property type="match status" value="1"/>
</dbReference>
<dbReference type="Gene3D" id="4.10.950.10">
    <property type="entry name" value="Ribosomal protein L2, domain 3"/>
    <property type="match status" value="1"/>
</dbReference>
<dbReference type="HAMAP" id="MF_01320_B">
    <property type="entry name" value="Ribosomal_uL2_B"/>
    <property type="match status" value="1"/>
</dbReference>
<dbReference type="InterPro" id="IPR012340">
    <property type="entry name" value="NA-bd_OB-fold"/>
</dbReference>
<dbReference type="InterPro" id="IPR014722">
    <property type="entry name" value="Rib_uL2_dom2"/>
</dbReference>
<dbReference type="InterPro" id="IPR002171">
    <property type="entry name" value="Ribosomal_uL2"/>
</dbReference>
<dbReference type="InterPro" id="IPR005880">
    <property type="entry name" value="Ribosomal_uL2_bac/org-type"/>
</dbReference>
<dbReference type="InterPro" id="IPR022669">
    <property type="entry name" value="Ribosomal_uL2_C"/>
</dbReference>
<dbReference type="InterPro" id="IPR022671">
    <property type="entry name" value="Ribosomal_uL2_CS"/>
</dbReference>
<dbReference type="InterPro" id="IPR014726">
    <property type="entry name" value="Ribosomal_uL2_dom3"/>
</dbReference>
<dbReference type="InterPro" id="IPR022666">
    <property type="entry name" value="Ribosomal_uL2_RNA-bd_dom"/>
</dbReference>
<dbReference type="InterPro" id="IPR008991">
    <property type="entry name" value="Translation_prot_SH3-like_sf"/>
</dbReference>
<dbReference type="NCBIfam" id="TIGR01171">
    <property type="entry name" value="rplB_bact"/>
    <property type="match status" value="1"/>
</dbReference>
<dbReference type="PANTHER" id="PTHR13691:SF5">
    <property type="entry name" value="LARGE RIBOSOMAL SUBUNIT PROTEIN UL2M"/>
    <property type="match status" value="1"/>
</dbReference>
<dbReference type="PANTHER" id="PTHR13691">
    <property type="entry name" value="RIBOSOMAL PROTEIN L2"/>
    <property type="match status" value="1"/>
</dbReference>
<dbReference type="Pfam" id="PF00181">
    <property type="entry name" value="Ribosomal_L2"/>
    <property type="match status" value="1"/>
</dbReference>
<dbReference type="Pfam" id="PF03947">
    <property type="entry name" value="Ribosomal_L2_C"/>
    <property type="match status" value="1"/>
</dbReference>
<dbReference type="PIRSF" id="PIRSF002158">
    <property type="entry name" value="Ribosomal_L2"/>
    <property type="match status" value="1"/>
</dbReference>
<dbReference type="SMART" id="SM01383">
    <property type="entry name" value="Ribosomal_L2"/>
    <property type="match status" value="1"/>
</dbReference>
<dbReference type="SMART" id="SM01382">
    <property type="entry name" value="Ribosomal_L2_C"/>
    <property type="match status" value="1"/>
</dbReference>
<dbReference type="SUPFAM" id="SSF50249">
    <property type="entry name" value="Nucleic acid-binding proteins"/>
    <property type="match status" value="1"/>
</dbReference>
<dbReference type="SUPFAM" id="SSF50104">
    <property type="entry name" value="Translation proteins SH3-like domain"/>
    <property type="match status" value="1"/>
</dbReference>
<dbReference type="PROSITE" id="PS00467">
    <property type="entry name" value="RIBOSOMAL_L2"/>
    <property type="match status" value="1"/>
</dbReference>
<reference key="1">
    <citation type="journal article" date="2007" name="Mol. Phylogenet. Evol.">
        <title>Phylogenetic and evolutionary implications of complete chloroplast genome sequences of four early-diverging angiosperms: Buxus (Buxaceae), Chloranthus (Chloranthaceae), Dioscorea (Dioscoreaceae), and Illicium (Schisandraceae).</title>
        <authorList>
            <person name="Hansen D.R."/>
            <person name="Dastidar S.G."/>
            <person name="Cai Z."/>
            <person name="Penaflor C."/>
            <person name="Kuehl J.V."/>
            <person name="Boore J.L."/>
            <person name="Jansen R.K."/>
        </authorList>
    </citation>
    <scope>NUCLEOTIDE SEQUENCE [LARGE SCALE GENOMIC DNA]</scope>
</reference>
<feature type="chain" id="PRO_0000310068" description="Large ribosomal subunit protein uL2cy">
    <location>
        <begin position="1"/>
        <end position="273"/>
    </location>
</feature>
<feature type="region of interest" description="Disordered" evidence="3">
    <location>
        <begin position="1"/>
        <end position="22"/>
    </location>
</feature>
<feature type="region of interest" description="Disordered" evidence="3">
    <location>
        <begin position="224"/>
        <end position="273"/>
    </location>
</feature>